<reference key="1">
    <citation type="journal article" date="2002" name="DNA Res.">
        <title>Complete genomic sequence of nitrogen-fixing symbiotic bacterium Bradyrhizobium japonicum USDA110.</title>
        <authorList>
            <person name="Kaneko T."/>
            <person name="Nakamura Y."/>
            <person name="Sato S."/>
            <person name="Minamisawa K."/>
            <person name="Uchiumi T."/>
            <person name="Sasamoto S."/>
            <person name="Watanabe A."/>
            <person name="Idesawa K."/>
            <person name="Iriguchi M."/>
            <person name="Kawashima K."/>
            <person name="Kohara M."/>
            <person name="Matsumoto M."/>
            <person name="Shimpo S."/>
            <person name="Tsuruoka H."/>
            <person name="Wada T."/>
            <person name="Yamada M."/>
            <person name="Tabata S."/>
        </authorList>
    </citation>
    <scope>NUCLEOTIDE SEQUENCE [LARGE SCALE GENOMIC DNA]</scope>
    <source>
        <strain>JCM 10833 / BCRC 13528 / IAM 13628 / NBRC 14792 / USDA 110</strain>
    </source>
</reference>
<proteinExistence type="inferred from homology"/>
<organism>
    <name type="scientific">Bradyrhizobium diazoefficiens (strain JCM 10833 / BCRC 13528 / IAM 13628 / NBRC 14792 / USDA 110)</name>
    <dbReference type="NCBI Taxonomy" id="224911"/>
    <lineage>
        <taxon>Bacteria</taxon>
        <taxon>Pseudomonadati</taxon>
        <taxon>Pseudomonadota</taxon>
        <taxon>Alphaproteobacteria</taxon>
        <taxon>Hyphomicrobiales</taxon>
        <taxon>Nitrobacteraceae</taxon>
        <taxon>Bradyrhizobium</taxon>
    </lineage>
</organism>
<gene>
    <name type="ordered locus">bll0699</name>
</gene>
<evidence type="ECO:0000255" key="1">
    <source>
        <dbReference type="HAMAP-Rule" id="MF_00476"/>
    </source>
</evidence>
<dbReference type="EMBL" id="BA000040">
    <property type="protein sequence ID" value="BAC45964.1"/>
    <property type="molecule type" value="Genomic_DNA"/>
</dbReference>
<dbReference type="RefSeq" id="NP_767339.1">
    <property type="nucleotide sequence ID" value="NC_004463.1"/>
</dbReference>
<dbReference type="RefSeq" id="WP_011083525.1">
    <property type="nucleotide sequence ID" value="NC_004463.1"/>
</dbReference>
<dbReference type="SMR" id="Q89WI8"/>
<dbReference type="FunCoup" id="Q89WI8">
    <property type="interactions" value="55"/>
</dbReference>
<dbReference type="STRING" id="224911.AAV28_00330"/>
<dbReference type="EnsemblBacteria" id="BAC45964">
    <property type="protein sequence ID" value="BAC45964"/>
    <property type="gene ID" value="BAC45964"/>
</dbReference>
<dbReference type="GeneID" id="46487972"/>
<dbReference type="KEGG" id="bja:bll0699"/>
<dbReference type="PATRIC" id="fig|224911.44.peg.69"/>
<dbReference type="eggNOG" id="COG0864">
    <property type="taxonomic scope" value="Bacteria"/>
</dbReference>
<dbReference type="HOGENOM" id="CLU_113319_1_4_5"/>
<dbReference type="InParanoid" id="Q89WI8"/>
<dbReference type="OrthoDB" id="9806294at2"/>
<dbReference type="PhylomeDB" id="Q89WI8"/>
<dbReference type="Proteomes" id="UP000002526">
    <property type="component" value="Chromosome"/>
</dbReference>
<dbReference type="GO" id="GO:0003677">
    <property type="term" value="F:DNA binding"/>
    <property type="evidence" value="ECO:0000318"/>
    <property type="project" value="GO_Central"/>
</dbReference>
<dbReference type="GO" id="GO:0003700">
    <property type="term" value="F:DNA-binding transcription factor activity"/>
    <property type="evidence" value="ECO:0007669"/>
    <property type="project" value="UniProtKB-UniRule"/>
</dbReference>
<dbReference type="GO" id="GO:0016151">
    <property type="term" value="F:nickel cation binding"/>
    <property type="evidence" value="ECO:0007669"/>
    <property type="project" value="UniProtKB-UniRule"/>
</dbReference>
<dbReference type="GO" id="GO:0006355">
    <property type="term" value="P:regulation of DNA-templated transcription"/>
    <property type="evidence" value="ECO:0000318"/>
    <property type="project" value="GO_Central"/>
</dbReference>
<dbReference type="GO" id="GO:0010045">
    <property type="term" value="P:response to nickel cation"/>
    <property type="evidence" value="ECO:0007669"/>
    <property type="project" value="InterPro"/>
</dbReference>
<dbReference type="CDD" id="cd22231">
    <property type="entry name" value="RHH_NikR_HicB-like"/>
    <property type="match status" value="1"/>
</dbReference>
<dbReference type="Gene3D" id="3.30.70.1150">
    <property type="entry name" value="ACT-like. Chain A, domain 2"/>
    <property type="match status" value="1"/>
</dbReference>
<dbReference type="Gene3D" id="1.10.1220.10">
    <property type="entry name" value="Met repressor-like"/>
    <property type="match status" value="1"/>
</dbReference>
<dbReference type="HAMAP" id="MF_00476">
    <property type="entry name" value="NikR"/>
    <property type="match status" value="1"/>
</dbReference>
<dbReference type="InterPro" id="IPR027271">
    <property type="entry name" value="Acetolactate_synth/TF_NikR_C"/>
</dbReference>
<dbReference type="InterPro" id="IPR045865">
    <property type="entry name" value="ACT-like_dom_sf"/>
</dbReference>
<dbReference type="InterPro" id="IPR013321">
    <property type="entry name" value="Arc_rbn_hlx_hlx"/>
</dbReference>
<dbReference type="InterPro" id="IPR002145">
    <property type="entry name" value="CopG"/>
</dbReference>
<dbReference type="InterPro" id="IPR050192">
    <property type="entry name" value="CopG/NikR_regulator"/>
</dbReference>
<dbReference type="InterPro" id="IPR022988">
    <property type="entry name" value="Ni_resp_reg_NikR"/>
</dbReference>
<dbReference type="InterPro" id="IPR014160">
    <property type="entry name" value="Nickel_NikR_proteobac"/>
</dbReference>
<dbReference type="InterPro" id="IPR010985">
    <property type="entry name" value="Ribbon_hlx_hlx"/>
</dbReference>
<dbReference type="InterPro" id="IPR014864">
    <property type="entry name" value="TF_NikR_Ni-bd_C"/>
</dbReference>
<dbReference type="NCBIfam" id="TIGR02793">
    <property type="entry name" value="nikR"/>
    <property type="match status" value="1"/>
</dbReference>
<dbReference type="NCBIfam" id="NF002815">
    <property type="entry name" value="PRK02967.1"/>
    <property type="match status" value="1"/>
</dbReference>
<dbReference type="NCBIfam" id="NF003381">
    <property type="entry name" value="PRK04460.1"/>
    <property type="match status" value="1"/>
</dbReference>
<dbReference type="PANTHER" id="PTHR34719">
    <property type="entry name" value="NICKEL-RESPONSIVE REGULATOR"/>
    <property type="match status" value="1"/>
</dbReference>
<dbReference type="PANTHER" id="PTHR34719:SF2">
    <property type="entry name" value="NICKEL-RESPONSIVE REGULATOR"/>
    <property type="match status" value="1"/>
</dbReference>
<dbReference type="Pfam" id="PF08753">
    <property type="entry name" value="NikR_C"/>
    <property type="match status" value="1"/>
</dbReference>
<dbReference type="Pfam" id="PF01402">
    <property type="entry name" value="RHH_1"/>
    <property type="match status" value="1"/>
</dbReference>
<dbReference type="SUPFAM" id="SSF55021">
    <property type="entry name" value="ACT-like"/>
    <property type="match status" value="1"/>
</dbReference>
<dbReference type="SUPFAM" id="SSF47598">
    <property type="entry name" value="Ribbon-helix-helix"/>
    <property type="match status" value="1"/>
</dbReference>
<comment type="function">
    <text evidence="1">Transcriptional regulator.</text>
</comment>
<comment type="cofactor">
    <cofactor evidence="1">
        <name>Ni(2+)</name>
        <dbReference type="ChEBI" id="CHEBI:49786"/>
    </cofactor>
    <text evidence="1">Binds 1 nickel ion per subunit.</text>
</comment>
<comment type="similarity">
    <text evidence="1">Belongs to the transcriptional regulatory CopG/NikR family.</text>
</comment>
<protein>
    <recommendedName>
        <fullName evidence="1">Putative nickel-responsive regulator</fullName>
    </recommendedName>
</protein>
<name>NIKR_BRADU</name>
<feature type="chain" id="PRO_0000139285" description="Putative nickel-responsive regulator">
    <location>
        <begin position="1"/>
        <end position="148"/>
    </location>
</feature>
<feature type="binding site" evidence="1">
    <location>
        <position position="77"/>
    </location>
    <ligand>
        <name>Ni(2+)</name>
        <dbReference type="ChEBI" id="CHEBI:49786"/>
    </ligand>
</feature>
<feature type="binding site" evidence="1">
    <location>
        <position position="88"/>
    </location>
    <ligand>
        <name>Ni(2+)</name>
        <dbReference type="ChEBI" id="CHEBI:49786"/>
    </ligand>
</feature>
<feature type="binding site" evidence="1">
    <location>
        <position position="90"/>
    </location>
    <ligand>
        <name>Ni(2+)</name>
        <dbReference type="ChEBI" id="CHEBI:49786"/>
    </ligand>
</feature>
<feature type="binding site" evidence="1">
    <location>
        <position position="96"/>
    </location>
    <ligand>
        <name>Ni(2+)</name>
        <dbReference type="ChEBI" id="CHEBI:49786"/>
    </ligand>
</feature>
<keyword id="KW-0238">DNA-binding</keyword>
<keyword id="KW-0479">Metal-binding</keyword>
<keyword id="KW-0533">Nickel</keyword>
<keyword id="KW-1185">Reference proteome</keyword>
<keyword id="KW-0804">Transcription</keyword>
<keyword id="KW-0805">Transcription regulation</keyword>
<sequence>MQRITITIEDDLLAEIDAAAAARGYQNRSEIIRDLARAGLQQTSEDTAQTGPCVAGLVYVYDHAARDLSKRLVQEFHGHHDLALATLHVHLDDNNCMEMTALRGAADEVRHFADHIIAERGVRYGRVVMIPTGEGKPAKARKHGHRHE</sequence>
<accession>Q89WI8</accession>